<sequence length="313" mass="34719">MMENFKHTTVLLDEAVNGLNIRPDGIYIDGTFGRGGHSRLILSQLGEEGRLLAIDRDPQAIAVAQAISDPRFSIIHGPFSALADYVAERELTGKIDGILLDLGVSSPQLDDAERGFSFMRDGPLDMRMDPTRGQSAAEWLQTAEEADIAWVLKTFGEERFAKRIARAIVERNREQPMTRTKELAEVVAAATPVKDKFKHPATRTFQAVRIWVNSELEEIEQALKSSLSVLAPGGRLSIISFHSLEDRIVKRFMREQSRGPQVPAGLPMTEAQLKKLGGRELRALGKLMPGEKEVAENPRARSSVLRIAERTNA</sequence>
<feature type="chain" id="PRO_0000108697" description="Ribosomal RNA small subunit methyltransferase H">
    <location>
        <begin position="1"/>
        <end position="313"/>
    </location>
</feature>
<feature type="binding site" evidence="1">
    <location>
        <begin position="35"/>
        <end position="37"/>
    </location>
    <ligand>
        <name>S-adenosyl-L-methionine</name>
        <dbReference type="ChEBI" id="CHEBI:59789"/>
    </ligand>
</feature>
<feature type="binding site" evidence="1">
    <location>
        <position position="55"/>
    </location>
    <ligand>
        <name>S-adenosyl-L-methionine</name>
        <dbReference type="ChEBI" id="CHEBI:59789"/>
    </ligand>
</feature>
<feature type="binding site" evidence="1">
    <location>
        <position position="79"/>
    </location>
    <ligand>
        <name>S-adenosyl-L-methionine</name>
        <dbReference type="ChEBI" id="CHEBI:59789"/>
    </ligand>
</feature>
<feature type="binding site" evidence="1">
    <location>
        <position position="101"/>
    </location>
    <ligand>
        <name>S-adenosyl-L-methionine</name>
        <dbReference type="ChEBI" id="CHEBI:59789"/>
    </ligand>
</feature>
<feature type="binding site" evidence="1">
    <location>
        <position position="108"/>
    </location>
    <ligand>
        <name>S-adenosyl-L-methionine</name>
        <dbReference type="ChEBI" id="CHEBI:59789"/>
    </ligand>
</feature>
<gene>
    <name evidence="1" type="primary">rsmH</name>
    <name type="synonym">mraW</name>
    <name type="ordered locus">SPA0122</name>
</gene>
<protein>
    <recommendedName>
        <fullName evidence="1">Ribosomal RNA small subunit methyltransferase H</fullName>
        <ecNumber evidence="1">2.1.1.199</ecNumber>
    </recommendedName>
    <alternativeName>
        <fullName evidence="1">16S rRNA m(4)C1402 methyltransferase</fullName>
    </alternativeName>
    <alternativeName>
        <fullName evidence="1">rRNA (cytosine-N(4)-)-methyltransferase RsmH</fullName>
    </alternativeName>
</protein>
<dbReference type="EC" id="2.1.1.199" evidence="1"/>
<dbReference type="EMBL" id="CP000026">
    <property type="protein sequence ID" value="AAV76155.1"/>
    <property type="molecule type" value="Genomic_DNA"/>
</dbReference>
<dbReference type="RefSeq" id="WP_000970435.1">
    <property type="nucleotide sequence ID" value="NC_006511.1"/>
</dbReference>
<dbReference type="SMR" id="Q5PDH4"/>
<dbReference type="KEGG" id="spt:SPA0122"/>
<dbReference type="HOGENOM" id="CLU_038422_2_0_6"/>
<dbReference type="Proteomes" id="UP000008185">
    <property type="component" value="Chromosome"/>
</dbReference>
<dbReference type="GO" id="GO:0005737">
    <property type="term" value="C:cytoplasm"/>
    <property type="evidence" value="ECO:0007669"/>
    <property type="project" value="UniProtKB-SubCell"/>
</dbReference>
<dbReference type="GO" id="GO:0071424">
    <property type="term" value="F:rRNA (cytosine-N4-)-methyltransferase activity"/>
    <property type="evidence" value="ECO:0007669"/>
    <property type="project" value="UniProtKB-UniRule"/>
</dbReference>
<dbReference type="GO" id="GO:0070475">
    <property type="term" value="P:rRNA base methylation"/>
    <property type="evidence" value="ECO:0007669"/>
    <property type="project" value="UniProtKB-UniRule"/>
</dbReference>
<dbReference type="FunFam" id="1.10.150.170:FF:000001">
    <property type="entry name" value="Ribosomal RNA small subunit methyltransferase H"/>
    <property type="match status" value="1"/>
</dbReference>
<dbReference type="Gene3D" id="1.10.150.170">
    <property type="entry name" value="Putative methyltransferase TM0872, insert domain"/>
    <property type="match status" value="1"/>
</dbReference>
<dbReference type="Gene3D" id="3.40.50.150">
    <property type="entry name" value="Vaccinia Virus protein VP39"/>
    <property type="match status" value="1"/>
</dbReference>
<dbReference type="HAMAP" id="MF_01007">
    <property type="entry name" value="16SrRNA_methyltr_H"/>
    <property type="match status" value="1"/>
</dbReference>
<dbReference type="InterPro" id="IPR002903">
    <property type="entry name" value="RsmH"/>
</dbReference>
<dbReference type="InterPro" id="IPR023397">
    <property type="entry name" value="SAM-dep_MeTrfase_MraW_recog"/>
</dbReference>
<dbReference type="InterPro" id="IPR029063">
    <property type="entry name" value="SAM-dependent_MTases_sf"/>
</dbReference>
<dbReference type="NCBIfam" id="TIGR00006">
    <property type="entry name" value="16S rRNA (cytosine(1402)-N(4))-methyltransferase RsmH"/>
    <property type="match status" value="1"/>
</dbReference>
<dbReference type="PANTHER" id="PTHR11265:SF0">
    <property type="entry name" value="12S RRNA N4-METHYLCYTIDINE METHYLTRANSFERASE"/>
    <property type="match status" value="1"/>
</dbReference>
<dbReference type="PANTHER" id="PTHR11265">
    <property type="entry name" value="S-ADENOSYL-METHYLTRANSFERASE MRAW"/>
    <property type="match status" value="1"/>
</dbReference>
<dbReference type="Pfam" id="PF01795">
    <property type="entry name" value="Methyltransf_5"/>
    <property type="match status" value="1"/>
</dbReference>
<dbReference type="PIRSF" id="PIRSF004486">
    <property type="entry name" value="MraW"/>
    <property type="match status" value="1"/>
</dbReference>
<dbReference type="SUPFAM" id="SSF81799">
    <property type="entry name" value="Putative methyltransferase TM0872, insert domain"/>
    <property type="match status" value="1"/>
</dbReference>
<dbReference type="SUPFAM" id="SSF53335">
    <property type="entry name" value="S-adenosyl-L-methionine-dependent methyltransferases"/>
    <property type="match status" value="1"/>
</dbReference>
<comment type="function">
    <text evidence="1">Specifically methylates the N4 position of cytidine in position 1402 (C1402) of 16S rRNA.</text>
</comment>
<comment type="catalytic activity">
    <reaction evidence="1">
        <text>cytidine(1402) in 16S rRNA + S-adenosyl-L-methionine = N(4)-methylcytidine(1402) in 16S rRNA + S-adenosyl-L-homocysteine + H(+)</text>
        <dbReference type="Rhea" id="RHEA:42928"/>
        <dbReference type="Rhea" id="RHEA-COMP:10286"/>
        <dbReference type="Rhea" id="RHEA-COMP:10287"/>
        <dbReference type="ChEBI" id="CHEBI:15378"/>
        <dbReference type="ChEBI" id="CHEBI:57856"/>
        <dbReference type="ChEBI" id="CHEBI:59789"/>
        <dbReference type="ChEBI" id="CHEBI:74506"/>
        <dbReference type="ChEBI" id="CHEBI:82748"/>
        <dbReference type="EC" id="2.1.1.199"/>
    </reaction>
</comment>
<comment type="subcellular location">
    <subcellularLocation>
        <location evidence="1">Cytoplasm</location>
    </subcellularLocation>
</comment>
<comment type="similarity">
    <text evidence="1">Belongs to the methyltransferase superfamily. RsmH family.</text>
</comment>
<evidence type="ECO:0000255" key="1">
    <source>
        <dbReference type="HAMAP-Rule" id="MF_01007"/>
    </source>
</evidence>
<accession>Q5PDH4</accession>
<keyword id="KW-0963">Cytoplasm</keyword>
<keyword id="KW-0489">Methyltransferase</keyword>
<keyword id="KW-0698">rRNA processing</keyword>
<keyword id="KW-0949">S-adenosyl-L-methionine</keyword>
<keyword id="KW-0808">Transferase</keyword>
<organism>
    <name type="scientific">Salmonella paratyphi A (strain ATCC 9150 / SARB42)</name>
    <dbReference type="NCBI Taxonomy" id="295319"/>
    <lineage>
        <taxon>Bacteria</taxon>
        <taxon>Pseudomonadati</taxon>
        <taxon>Pseudomonadota</taxon>
        <taxon>Gammaproteobacteria</taxon>
        <taxon>Enterobacterales</taxon>
        <taxon>Enterobacteriaceae</taxon>
        <taxon>Salmonella</taxon>
    </lineage>
</organism>
<name>RSMH_SALPA</name>
<reference key="1">
    <citation type="journal article" date="2004" name="Nat. Genet.">
        <title>Comparison of genome degradation in Paratyphi A and Typhi, human-restricted serovars of Salmonella enterica that cause typhoid.</title>
        <authorList>
            <person name="McClelland M."/>
            <person name="Sanderson K.E."/>
            <person name="Clifton S.W."/>
            <person name="Latreille P."/>
            <person name="Porwollik S."/>
            <person name="Sabo A."/>
            <person name="Meyer R."/>
            <person name="Bieri T."/>
            <person name="Ozersky P."/>
            <person name="McLellan M."/>
            <person name="Harkins C.R."/>
            <person name="Wang C."/>
            <person name="Nguyen C."/>
            <person name="Berghoff A."/>
            <person name="Elliott G."/>
            <person name="Kohlberg S."/>
            <person name="Strong C."/>
            <person name="Du F."/>
            <person name="Carter J."/>
            <person name="Kremizki C."/>
            <person name="Layman D."/>
            <person name="Leonard S."/>
            <person name="Sun H."/>
            <person name="Fulton L."/>
            <person name="Nash W."/>
            <person name="Miner T."/>
            <person name="Minx P."/>
            <person name="Delehaunty K."/>
            <person name="Fronick C."/>
            <person name="Magrini V."/>
            <person name="Nhan M."/>
            <person name="Warren W."/>
            <person name="Florea L."/>
            <person name="Spieth J."/>
            <person name="Wilson R.K."/>
        </authorList>
    </citation>
    <scope>NUCLEOTIDE SEQUENCE [LARGE SCALE GENOMIC DNA]</scope>
    <source>
        <strain>ATCC 9150 / SARB42</strain>
    </source>
</reference>
<proteinExistence type="inferred from homology"/>